<evidence type="ECO:0000255" key="1">
    <source>
        <dbReference type="HAMAP-Rule" id="MF_01478"/>
    </source>
</evidence>
<evidence type="ECO:0000256" key="2">
    <source>
        <dbReference type="SAM" id="MobiDB-lite"/>
    </source>
</evidence>
<reference key="1">
    <citation type="journal article" date="1997" name="Biochim. Biophys. Acta">
        <title>Nucleotide sequence of a gene cluster encoding NusG and the L11-L1-L10-L12 ribosomal proteins from the thermophilic archaeon Sulfolobus solfataricus.</title>
        <authorList>
            <person name="Geiger M."/>
            <person name="Groebner P."/>
            <person name="Piendl W."/>
        </authorList>
    </citation>
    <scope>NUCLEOTIDE SEQUENCE [GENOMIC DNA]</scope>
</reference>
<reference key="2">
    <citation type="journal article" date="2001" name="Proc. Natl. Acad. Sci. U.S.A.">
        <title>The complete genome of the crenarchaeon Sulfolobus solfataricus P2.</title>
        <authorList>
            <person name="She Q."/>
            <person name="Singh R.K."/>
            <person name="Confalonieri F."/>
            <person name="Zivanovic Y."/>
            <person name="Allard G."/>
            <person name="Awayez M.J."/>
            <person name="Chan-Weiher C.C.-Y."/>
            <person name="Clausen I.G."/>
            <person name="Curtis B.A."/>
            <person name="De Moors A."/>
            <person name="Erauso G."/>
            <person name="Fletcher C."/>
            <person name="Gordon P.M.K."/>
            <person name="Heikamp-de Jong I."/>
            <person name="Jeffries A.C."/>
            <person name="Kozera C.J."/>
            <person name="Medina N."/>
            <person name="Peng X."/>
            <person name="Thi-Ngoc H.P."/>
            <person name="Redder P."/>
            <person name="Schenk M.E."/>
            <person name="Theriault C."/>
            <person name="Tolstrup N."/>
            <person name="Charlebois R.L."/>
            <person name="Doolittle W.F."/>
            <person name="Duguet M."/>
            <person name="Gaasterland T."/>
            <person name="Garrett R.A."/>
            <person name="Ragan M.A."/>
            <person name="Sensen C.W."/>
            <person name="Van der Oost J."/>
        </authorList>
    </citation>
    <scope>NUCLEOTIDE SEQUENCE [LARGE SCALE GENOMIC DNA]</scope>
    <source>
        <strain>ATCC 35092 / DSM 1617 / JCM 11322 / P2</strain>
    </source>
</reference>
<keyword id="KW-1185">Reference proteome</keyword>
<keyword id="KW-0687">Ribonucleoprotein</keyword>
<keyword id="KW-0689">Ribosomal protein</keyword>
<feature type="chain" id="PRO_0000157637" description="Large ribosomal subunit protein P1">
    <location>
        <begin position="1"/>
        <end position="106"/>
    </location>
</feature>
<feature type="region of interest" description="Disordered" evidence="2">
    <location>
        <begin position="66"/>
        <end position="106"/>
    </location>
</feature>
<feature type="compositionally biased region" description="Low complexity" evidence="2">
    <location>
        <begin position="66"/>
        <end position="76"/>
    </location>
</feature>
<feature type="compositionally biased region" description="Basic and acidic residues" evidence="2">
    <location>
        <begin position="77"/>
        <end position="93"/>
    </location>
</feature>
<comment type="function">
    <text evidence="1">Forms part of the ribosomal stalk, playing a central role in the interaction of the ribosome with GTP-bound translation factors.</text>
</comment>
<comment type="subunit">
    <text evidence="1">Part of the 50S ribosomal subunit. Homodimer, it forms part of the ribosomal stalk which helps the ribosome interact with GTP-bound translation factors. Forms a heptameric uL10/P0(P1)2(P1)2(P1)2 complex, where uL10/P0 forms an elongated spine to which the P1 dimers bind in a sequential fashion.</text>
</comment>
<comment type="similarity">
    <text evidence="1">Belongs to the eukaryotic ribosomal protein P1/P2 family.</text>
</comment>
<organism>
    <name type="scientific">Saccharolobus solfataricus (strain ATCC 35092 / DSM 1617 / JCM 11322 / P2)</name>
    <name type="common">Sulfolobus solfataricus</name>
    <dbReference type="NCBI Taxonomy" id="273057"/>
    <lineage>
        <taxon>Archaea</taxon>
        <taxon>Thermoproteota</taxon>
        <taxon>Thermoprotei</taxon>
        <taxon>Sulfolobales</taxon>
        <taxon>Sulfolobaceae</taxon>
        <taxon>Saccharolobus</taxon>
    </lineage>
</organism>
<protein>
    <recommendedName>
        <fullName evidence="1">Large ribosomal subunit protein P1</fullName>
    </recommendedName>
    <alternativeName>
        <fullName evidence="1">50S ribosomal protein L12</fullName>
    </alternativeName>
</protein>
<gene>
    <name evidence="1" type="primary">rpl12</name>
    <name type="synonym">rpl12Ab</name>
    <name type="ordered locus">SSO0342</name>
</gene>
<proteinExistence type="inferred from homology"/>
<name>RL12_SACS2</name>
<sequence>MEYIYASLLLHSAKKEISEDALKNVLTAAGISVDEVRLKAVVAALKEVNIDEVLKNAAAMPVAVAAQPQATQAQPAAEEKKEEKKEEEKKGPSEEEIASGLASLFG</sequence>
<accession>P96040</accession>
<dbReference type="EMBL" id="U85262">
    <property type="protein sequence ID" value="AAB99527.1"/>
    <property type="molecule type" value="Genomic_DNA"/>
</dbReference>
<dbReference type="EMBL" id="AE006641">
    <property type="protein sequence ID" value="AAK40672.1"/>
    <property type="molecule type" value="Genomic_DNA"/>
</dbReference>
<dbReference type="PIR" id="A90177">
    <property type="entry name" value="A90177"/>
</dbReference>
<dbReference type="SMR" id="P96040"/>
<dbReference type="FunCoup" id="P96040">
    <property type="interactions" value="64"/>
</dbReference>
<dbReference type="STRING" id="273057.SSO0342"/>
<dbReference type="PaxDb" id="273057-SSO0342"/>
<dbReference type="EnsemblBacteria" id="AAK40672">
    <property type="protein sequence ID" value="AAK40672"/>
    <property type="gene ID" value="SSO0342"/>
</dbReference>
<dbReference type="KEGG" id="sso:SSO0342"/>
<dbReference type="PATRIC" id="fig|273057.12.peg.333"/>
<dbReference type="eggNOG" id="arCOG04287">
    <property type="taxonomic scope" value="Archaea"/>
</dbReference>
<dbReference type="HOGENOM" id="CLU_114656_2_0_2"/>
<dbReference type="InParanoid" id="P96040"/>
<dbReference type="PhylomeDB" id="P96040"/>
<dbReference type="Proteomes" id="UP000001974">
    <property type="component" value="Chromosome"/>
</dbReference>
<dbReference type="GO" id="GO:1990904">
    <property type="term" value="C:ribonucleoprotein complex"/>
    <property type="evidence" value="ECO:0007669"/>
    <property type="project" value="UniProtKB-KW"/>
</dbReference>
<dbReference type="GO" id="GO:0005840">
    <property type="term" value="C:ribosome"/>
    <property type="evidence" value="ECO:0007669"/>
    <property type="project" value="UniProtKB-KW"/>
</dbReference>
<dbReference type="GO" id="GO:0003735">
    <property type="term" value="F:structural constituent of ribosome"/>
    <property type="evidence" value="ECO:0007669"/>
    <property type="project" value="InterPro"/>
</dbReference>
<dbReference type="GO" id="GO:0006414">
    <property type="term" value="P:translational elongation"/>
    <property type="evidence" value="ECO:0007669"/>
    <property type="project" value="InterPro"/>
</dbReference>
<dbReference type="CDD" id="cd05832">
    <property type="entry name" value="Ribosomal_L12p"/>
    <property type="match status" value="1"/>
</dbReference>
<dbReference type="FunFam" id="1.10.10.1410:FF:000002">
    <property type="entry name" value="60S acidic ribosomal protein P2"/>
    <property type="match status" value="1"/>
</dbReference>
<dbReference type="Gene3D" id="1.10.10.1410">
    <property type="match status" value="1"/>
</dbReference>
<dbReference type="HAMAP" id="MF_01478">
    <property type="entry name" value="Ribosomal_L12_arch"/>
    <property type="match status" value="1"/>
</dbReference>
<dbReference type="InterPro" id="IPR038716">
    <property type="entry name" value="P1/P2_N_sf"/>
</dbReference>
<dbReference type="InterPro" id="IPR027534">
    <property type="entry name" value="Ribosomal_P1/P2"/>
</dbReference>
<dbReference type="InterPro" id="IPR022295">
    <property type="entry name" value="Ribosomal_P1_arc"/>
</dbReference>
<dbReference type="NCBIfam" id="TIGR03685">
    <property type="entry name" value="ribo_P1_arch"/>
    <property type="match status" value="1"/>
</dbReference>
<dbReference type="PANTHER" id="PTHR45696">
    <property type="entry name" value="60S ACIDIC RIBOSOMAL PROTEIN P1"/>
    <property type="match status" value="1"/>
</dbReference>
<dbReference type="PANTHER" id="PTHR45696:SF10">
    <property type="entry name" value="LARGE RIBOSOMAL SUBUNIT PROTEIN P1"/>
    <property type="match status" value="1"/>
</dbReference>
<dbReference type="Pfam" id="PF00428">
    <property type="entry name" value="Ribosomal_60s"/>
    <property type="match status" value="1"/>
</dbReference>